<protein>
    <recommendedName>
        <fullName evidence="1">Glutamate-1-semialdehyde 2,1-aminomutase</fullName>
        <shortName evidence="1">GSA</shortName>
        <ecNumber evidence="1">5.4.3.8</ecNumber>
    </recommendedName>
    <alternativeName>
        <fullName evidence="1">Glutamate-1-semialdehyde aminotransferase</fullName>
        <shortName evidence="1">GSA-AT</shortName>
    </alternativeName>
</protein>
<organism>
    <name type="scientific">Coxiella burnetii (strain RSA 331 / Henzerling II)</name>
    <dbReference type="NCBI Taxonomy" id="360115"/>
    <lineage>
        <taxon>Bacteria</taxon>
        <taxon>Pseudomonadati</taxon>
        <taxon>Pseudomonadota</taxon>
        <taxon>Gammaproteobacteria</taxon>
        <taxon>Legionellales</taxon>
        <taxon>Coxiellaceae</taxon>
        <taxon>Coxiella</taxon>
    </lineage>
</organism>
<name>GSA_COXBR</name>
<proteinExistence type="inferred from homology"/>
<accession>A9NAX3</accession>
<reference key="1">
    <citation type="submission" date="2007-11" db="EMBL/GenBank/DDBJ databases">
        <title>Genome sequencing of phylogenetically and phenotypically diverse Coxiella burnetii isolates.</title>
        <authorList>
            <person name="Seshadri R."/>
            <person name="Samuel J.E."/>
        </authorList>
    </citation>
    <scope>NUCLEOTIDE SEQUENCE [LARGE SCALE GENOMIC DNA]</scope>
    <source>
        <strain>RSA 331 / Henzerling II</strain>
    </source>
</reference>
<dbReference type="EC" id="5.4.3.8" evidence="1"/>
<dbReference type="EMBL" id="CP000890">
    <property type="protein sequence ID" value="ABX77273.1"/>
    <property type="molecule type" value="Genomic_DNA"/>
</dbReference>
<dbReference type="RefSeq" id="WP_010958513.1">
    <property type="nucleotide sequence ID" value="NC_010117.1"/>
</dbReference>
<dbReference type="SMR" id="A9NAX3"/>
<dbReference type="KEGG" id="cbs:COXBURSA331_A2085"/>
<dbReference type="HOGENOM" id="CLU_016922_1_5_6"/>
<dbReference type="UniPathway" id="UPA00251">
    <property type="reaction ID" value="UER00317"/>
</dbReference>
<dbReference type="GO" id="GO:0005737">
    <property type="term" value="C:cytoplasm"/>
    <property type="evidence" value="ECO:0007669"/>
    <property type="project" value="UniProtKB-SubCell"/>
</dbReference>
<dbReference type="GO" id="GO:0042286">
    <property type="term" value="F:glutamate-1-semialdehyde 2,1-aminomutase activity"/>
    <property type="evidence" value="ECO:0007669"/>
    <property type="project" value="UniProtKB-UniRule"/>
</dbReference>
<dbReference type="GO" id="GO:0030170">
    <property type="term" value="F:pyridoxal phosphate binding"/>
    <property type="evidence" value="ECO:0007669"/>
    <property type="project" value="InterPro"/>
</dbReference>
<dbReference type="GO" id="GO:0008483">
    <property type="term" value="F:transaminase activity"/>
    <property type="evidence" value="ECO:0007669"/>
    <property type="project" value="InterPro"/>
</dbReference>
<dbReference type="GO" id="GO:0006782">
    <property type="term" value="P:protoporphyrinogen IX biosynthetic process"/>
    <property type="evidence" value="ECO:0007669"/>
    <property type="project" value="UniProtKB-UniRule"/>
</dbReference>
<dbReference type="CDD" id="cd00610">
    <property type="entry name" value="OAT_like"/>
    <property type="match status" value="1"/>
</dbReference>
<dbReference type="FunFam" id="3.40.640.10:FF:000021">
    <property type="entry name" value="Glutamate-1-semialdehyde 2,1-aminomutase"/>
    <property type="match status" value="1"/>
</dbReference>
<dbReference type="Gene3D" id="3.90.1150.10">
    <property type="entry name" value="Aspartate Aminotransferase, domain 1"/>
    <property type="match status" value="1"/>
</dbReference>
<dbReference type="Gene3D" id="3.40.640.10">
    <property type="entry name" value="Type I PLP-dependent aspartate aminotransferase-like (Major domain)"/>
    <property type="match status" value="1"/>
</dbReference>
<dbReference type="HAMAP" id="MF_00375">
    <property type="entry name" value="HemL_aminotrans_3"/>
    <property type="match status" value="1"/>
</dbReference>
<dbReference type="InterPro" id="IPR004639">
    <property type="entry name" value="4pyrrol_synth_GluAld_NH2Trfase"/>
</dbReference>
<dbReference type="InterPro" id="IPR005814">
    <property type="entry name" value="Aminotrans_3"/>
</dbReference>
<dbReference type="InterPro" id="IPR049704">
    <property type="entry name" value="Aminotrans_3_PPA_site"/>
</dbReference>
<dbReference type="InterPro" id="IPR015424">
    <property type="entry name" value="PyrdxlP-dep_Trfase"/>
</dbReference>
<dbReference type="InterPro" id="IPR015421">
    <property type="entry name" value="PyrdxlP-dep_Trfase_major"/>
</dbReference>
<dbReference type="InterPro" id="IPR015422">
    <property type="entry name" value="PyrdxlP-dep_Trfase_small"/>
</dbReference>
<dbReference type="NCBIfam" id="TIGR00713">
    <property type="entry name" value="hemL"/>
    <property type="match status" value="1"/>
</dbReference>
<dbReference type="NCBIfam" id="NF000818">
    <property type="entry name" value="PRK00062.1"/>
    <property type="match status" value="1"/>
</dbReference>
<dbReference type="PANTHER" id="PTHR43713">
    <property type="entry name" value="GLUTAMATE-1-SEMIALDEHYDE 2,1-AMINOMUTASE"/>
    <property type="match status" value="1"/>
</dbReference>
<dbReference type="PANTHER" id="PTHR43713:SF3">
    <property type="entry name" value="GLUTAMATE-1-SEMIALDEHYDE 2,1-AMINOMUTASE 1, CHLOROPLASTIC-RELATED"/>
    <property type="match status" value="1"/>
</dbReference>
<dbReference type="Pfam" id="PF00202">
    <property type="entry name" value="Aminotran_3"/>
    <property type="match status" value="1"/>
</dbReference>
<dbReference type="SUPFAM" id="SSF53383">
    <property type="entry name" value="PLP-dependent transferases"/>
    <property type="match status" value="1"/>
</dbReference>
<dbReference type="PROSITE" id="PS00600">
    <property type="entry name" value="AA_TRANSFER_CLASS_3"/>
    <property type="match status" value="1"/>
</dbReference>
<keyword id="KW-0963">Cytoplasm</keyword>
<keyword id="KW-0413">Isomerase</keyword>
<keyword id="KW-0627">Porphyrin biosynthesis</keyword>
<keyword id="KW-0663">Pyridoxal phosphate</keyword>
<comment type="catalytic activity">
    <reaction evidence="1">
        <text>(S)-4-amino-5-oxopentanoate = 5-aminolevulinate</text>
        <dbReference type="Rhea" id="RHEA:14265"/>
        <dbReference type="ChEBI" id="CHEBI:57501"/>
        <dbReference type="ChEBI" id="CHEBI:356416"/>
        <dbReference type="EC" id="5.4.3.8"/>
    </reaction>
</comment>
<comment type="cofactor">
    <cofactor evidence="1">
        <name>pyridoxal 5'-phosphate</name>
        <dbReference type="ChEBI" id="CHEBI:597326"/>
    </cofactor>
</comment>
<comment type="pathway">
    <text evidence="1">Porphyrin-containing compound metabolism; protoporphyrin-IX biosynthesis; 5-aminolevulinate from L-glutamyl-tRNA(Glu): step 2/2.</text>
</comment>
<comment type="subunit">
    <text evidence="1">Homodimer.</text>
</comment>
<comment type="subcellular location">
    <subcellularLocation>
        <location evidence="1">Cytoplasm</location>
    </subcellularLocation>
</comment>
<comment type="similarity">
    <text evidence="1">Belongs to the class-III pyridoxal-phosphate-dependent aminotransferase family. HemL subfamily.</text>
</comment>
<gene>
    <name evidence="1" type="primary">hemL</name>
    <name type="ordered locus">COXBURSA331_A2085</name>
</gene>
<sequence>MVDHSAALFNKAQNYMPGGVNSPVRAFGAVGGVPRFIKKASGPYLIDVDEKKYIDYVGSWGPMILGHAHPAVIQAAQEAVQNGLSFGAPCENEIKLAALIGEFMPSIEKVRMVNSGTEATMSALRLARGVTGRSKIIKFEGCYHGHADCLLVNAGSGALTFGMPSSPGVPLGTVQDTLTATFNDLDSVAALFEKYSKDIAAIIVEPIAGNMNLIPAAPDFLTGLRELCNQYGSLLIFDEVITGFRVAKGGAQSLYNIRPDLTALGKIIGGGMPVGAYGGRREIMNQLSPEGPVYQAGTLSGNPVAMAAGLATLKELTAENFYSNLKEKTERLVMGILSRAKAAKIPLTANFSCGIFGLIFTSEERVTRYAQAVNGNVEHFRSFFHKMLDNGVYLAPSAFESGFISAAHTNKEVDNTLDIIENIFSVSETYLRISV</sequence>
<evidence type="ECO:0000255" key="1">
    <source>
        <dbReference type="HAMAP-Rule" id="MF_00375"/>
    </source>
</evidence>
<feature type="chain" id="PRO_1000079920" description="Glutamate-1-semialdehyde 2,1-aminomutase">
    <location>
        <begin position="1"/>
        <end position="435"/>
    </location>
</feature>
<feature type="modified residue" description="N6-(pyridoxal phosphate)lysine" evidence="1">
    <location>
        <position position="266"/>
    </location>
</feature>